<comment type="function">
    <text evidence="1">One of the primary rRNA binding proteins, it binds specifically to the 5'-end of 16S ribosomal RNA.</text>
</comment>
<comment type="subunit">
    <text evidence="1">Part of the 30S ribosomal subunit.</text>
</comment>
<comment type="similarity">
    <text evidence="1">Belongs to the universal ribosomal protein uS17 family.</text>
</comment>
<proteinExistence type="inferred from homology"/>
<keyword id="KW-1185">Reference proteome</keyword>
<keyword id="KW-0687">Ribonucleoprotein</keyword>
<keyword id="KW-0689">Ribosomal protein</keyword>
<keyword id="KW-0694">RNA-binding</keyword>
<keyword id="KW-0699">rRNA-binding</keyword>
<sequence length="107" mass="12598">MPRKRLTGIVVSDKMDKTVVVAVEKLVQHPLYKKYVKRTKKYHAHDERNECKIGDVVEIEETRPLSKTKRWRVVRIIQRFEPERVVKEKEDIQEEIEAVEGKGGVES</sequence>
<evidence type="ECO:0000255" key="1">
    <source>
        <dbReference type="HAMAP-Rule" id="MF_01345"/>
    </source>
</evidence>
<evidence type="ECO:0000305" key="2"/>
<feature type="chain" id="PRO_0000128490" description="Small ribosomal subunit protein uS17">
    <location>
        <begin position="1"/>
        <end position="107"/>
    </location>
</feature>
<feature type="sequence conflict" description="In Ref. 1; CAA79786." evidence="2" ref="1">
    <original>T</original>
    <variation>A</variation>
    <location>
        <position position="68"/>
    </location>
</feature>
<name>RS17_THEMA</name>
<gene>
    <name evidence="1" type="primary">rpsQ</name>
    <name type="ordered locus">TM_1491</name>
</gene>
<dbReference type="EMBL" id="Z21677">
    <property type="protein sequence ID" value="CAA79786.1"/>
    <property type="molecule type" value="Genomic_DNA"/>
</dbReference>
<dbReference type="EMBL" id="AE000512">
    <property type="protein sequence ID" value="AAD36557.1"/>
    <property type="molecule type" value="Genomic_DNA"/>
</dbReference>
<dbReference type="PIR" id="C72249">
    <property type="entry name" value="C72249"/>
</dbReference>
<dbReference type="RefSeq" id="NP_229291.1">
    <property type="nucleotide sequence ID" value="NC_000853.1"/>
</dbReference>
<dbReference type="RefSeq" id="WP_004081818.1">
    <property type="nucleotide sequence ID" value="NC_000853.1"/>
</dbReference>
<dbReference type="SMR" id="P38519"/>
<dbReference type="FunCoup" id="P38519">
    <property type="interactions" value="357"/>
</dbReference>
<dbReference type="STRING" id="243274.TM_1491"/>
<dbReference type="PaxDb" id="243274-THEMA_06845"/>
<dbReference type="EnsemblBacteria" id="AAD36557">
    <property type="protein sequence ID" value="AAD36557"/>
    <property type="gene ID" value="TM_1491"/>
</dbReference>
<dbReference type="KEGG" id="tma:TM1491"/>
<dbReference type="KEGG" id="tmi:THEMA_06845"/>
<dbReference type="KEGG" id="tmm:Tmari_1499"/>
<dbReference type="KEGG" id="tmw:THMA_1523"/>
<dbReference type="eggNOG" id="COG0186">
    <property type="taxonomic scope" value="Bacteria"/>
</dbReference>
<dbReference type="InParanoid" id="P38519"/>
<dbReference type="OrthoDB" id="9811714at2"/>
<dbReference type="Proteomes" id="UP000008183">
    <property type="component" value="Chromosome"/>
</dbReference>
<dbReference type="GO" id="GO:0022627">
    <property type="term" value="C:cytosolic small ribosomal subunit"/>
    <property type="evidence" value="ECO:0000318"/>
    <property type="project" value="GO_Central"/>
</dbReference>
<dbReference type="GO" id="GO:0019843">
    <property type="term" value="F:rRNA binding"/>
    <property type="evidence" value="ECO:0007669"/>
    <property type="project" value="UniProtKB-UniRule"/>
</dbReference>
<dbReference type="GO" id="GO:0003735">
    <property type="term" value="F:structural constituent of ribosome"/>
    <property type="evidence" value="ECO:0000318"/>
    <property type="project" value="GO_Central"/>
</dbReference>
<dbReference type="GO" id="GO:0006412">
    <property type="term" value="P:translation"/>
    <property type="evidence" value="ECO:0007669"/>
    <property type="project" value="UniProtKB-UniRule"/>
</dbReference>
<dbReference type="CDD" id="cd00364">
    <property type="entry name" value="Ribosomal_uS17"/>
    <property type="match status" value="1"/>
</dbReference>
<dbReference type="FunFam" id="2.40.50.140:FF:000204">
    <property type="entry name" value="30S ribosomal protein S17"/>
    <property type="match status" value="1"/>
</dbReference>
<dbReference type="Gene3D" id="2.40.50.140">
    <property type="entry name" value="Nucleic acid-binding proteins"/>
    <property type="match status" value="1"/>
</dbReference>
<dbReference type="HAMAP" id="MF_01345_B">
    <property type="entry name" value="Ribosomal_uS17_B"/>
    <property type="match status" value="1"/>
</dbReference>
<dbReference type="InterPro" id="IPR012340">
    <property type="entry name" value="NA-bd_OB-fold"/>
</dbReference>
<dbReference type="InterPro" id="IPR000266">
    <property type="entry name" value="Ribosomal_uS17"/>
</dbReference>
<dbReference type="InterPro" id="IPR019984">
    <property type="entry name" value="Ribosomal_uS17_bact/chlr"/>
</dbReference>
<dbReference type="InterPro" id="IPR019979">
    <property type="entry name" value="Ribosomal_uS17_CS"/>
</dbReference>
<dbReference type="NCBIfam" id="NF004123">
    <property type="entry name" value="PRK05610.1"/>
    <property type="match status" value="1"/>
</dbReference>
<dbReference type="NCBIfam" id="TIGR03635">
    <property type="entry name" value="uS17_bact"/>
    <property type="match status" value="1"/>
</dbReference>
<dbReference type="PANTHER" id="PTHR10744">
    <property type="entry name" value="40S RIBOSOMAL PROTEIN S11 FAMILY MEMBER"/>
    <property type="match status" value="1"/>
</dbReference>
<dbReference type="PANTHER" id="PTHR10744:SF1">
    <property type="entry name" value="SMALL RIBOSOMAL SUBUNIT PROTEIN US17M"/>
    <property type="match status" value="1"/>
</dbReference>
<dbReference type="Pfam" id="PF00366">
    <property type="entry name" value="Ribosomal_S17"/>
    <property type="match status" value="1"/>
</dbReference>
<dbReference type="PRINTS" id="PR00973">
    <property type="entry name" value="RIBOSOMALS17"/>
</dbReference>
<dbReference type="SUPFAM" id="SSF50249">
    <property type="entry name" value="Nucleic acid-binding proteins"/>
    <property type="match status" value="1"/>
</dbReference>
<dbReference type="PROSITE" id="PS00056">
    <property type="entry name" value="RIBOSOMAL_S17"/>
    <property type="match status" value="1"/>
</dbReference>
<organism>
    <name type="scientific">Thermotoga maritima (strain ATCC 43589 / DSM 3109 / JCM 10099 / NBRC 100826 / MSB8)</name>
    <dbReference type="NCBI Taxonomy" id="243274"/>
    <lineage>
        <taxon>Bacteria</taxon>
        <taxon>Thermotogati</taxon>
        <taxon>Thermotogota</taxon>
        <taxon>Thermotogae</taxon>
        <taxon>Thermotogales</taxon>
        <taxon>Thermotogaceae</taxon>
        <taxon>Thermotoga</taxon>
    </lineage>
</organism>
<protein>
    <recommendedName>
        <fullName evidence="1">Small ribosomal subunit protein uS17</fullName>
    </recommendedName>
    <alternativeName>
        <fullName evidence="2">30S ribosomal protein S17</fullName>
    </alternativeName>
</protein>
<reference key="1">
    <citation type="journal article" date="1994" name="J. Bacteriol.">
        <title>Phylogenetic depth of S10 and spc operons: cloning and sequencing of a ribosomal protein gene cluster from the extremely thermophilic bacterium Thermotoga maritima.</title>
        <authorList>
            <person name="Sanangelantoni A.M."/>
            <person name="Bocchetta M."/>
            <person name="Cammarano P."/>
            <person name="Tiboni O."/>
        </authorList>
    </citation>
    <scope>NUCLEOTIDE SEQUENCE [GENOMIC DNA]</scope>
    <source>
        <strain>ATCC 43589 / DSM 3109 / JCM 10099 / NBRC 100826 / MSB8</strain>
    </source>
</reference>
<reference key="2">
    <citation type="journal article" date="1999" name="Nature">
        <title>Evidence for lateral gene transfer between Archaea and Bacteria from genome sequence of Thermotoga maritima.</title>
        <authorList>
            <person name="Nelson K.E."/>
            <person name="Clayton R.A."/>
            <person name="Gill S.R."/>
            <person name="Gwinn M.L."/>
            <person name="Dodson R.J."/>
            <person name="Haft D.H."/>
            <person name="Hickey E.K."/>
            <person name="Peterson J.D."/>
            <person name="Nelson W.C."/>
            <person name="Ketchum K.A."/>
            <person name="McDonald L.A."/>
            <person name="Utterback T.R."/>
            <person name="Malek J.A."/>
            <person name="Linher K.D."/>
            <person name="Garrett M.M."/>
            <person name="Stewart A.M."/>
            <person name="Cotton M.D."/>
            <person name="Pratt M.S."/>
            <person name="Phillips C.A."/>
            <person name="Richardson D.L."/>
            <person name="Heidelberg J.F."/>
            <person name="Sutton G.G."/>
            <person name="Fleischmann R.D."/>
            <person name="Eisen J.A."/>
            <person name="White O."/>
            <person name="Salzberg S.L."/>
            <person name="Smith H.O."/>
            <person name="Venter J.C."/>
            <person name="Fraser C.M."/>
        </authorList>
    </citation>
    <scope>NUCLEOTIDE SEQUENCE [LARGE SCALE GENOMIC DNA]</scope>
    <source>
        <strain>ATCC 43589 / DSM 3109 / JCM 10099 / NBRC 100826 / MSB8</strain>
    </source>
</reference>
<accession>P38519</accession>